<reference key="1">
    <citation type="journal article" date="2005" name="Proc. Natl. Acad. Sci. U.S.A.">
        <title>Complete genome sequence of Vibrio fischeri: a symbiotic bacterium with pathogenic congeners.</title>
        <authorList>
            <person name="Ruby E.G."/>
            <person name="Urbanowski M."/>
            <person name="Campbell J."/>
            <person name="Dunn A."/>
            <person name="Faini M."/>
            <person name="Gunsalus R."/>
            <person name="Lostroh P."/>
            <person name="Lupp C."/>
            <person name="McCann J."/>
            <person name="Millikan D."/>
            <person name="Schaefer A."/>
            <person name="Stabb E."/>
            <person name="Stevens A."/>
            <person name="Visick K."/>
            <person name="Whistler C."/>
            <person name="Greenberg E.P."/>
        </authorList>
    </citation>
    <scope>NUCLEOTIDE SEQUENCE [LARGE SCALE GENOMIC DNA]</scope>
    <source>
        <strain>ATCC 700601 / ES114</strain>
    </source>
</reference>
<feature type="chain" id="PRO_0000386378" description="GTPase Obg">
    <location>
        <begin position="1"/>
        <end position="390"/>
    </location>
</feature>
<feature type="domain" description="Obg" evidence="2">
    <location>
        <begin position="1"/>
        <end position="159"/>
    </location>
</feature>
<feature type="domain" description="OBG-type G" evidence="1">
    <location>
        <begin position="160"/>
        <end position="333"/>
    </location>
</feature>
<feature type="binding site" evidence="1">
    <location>
        <begin position="166"/>
        <end position="173"/>
    </location>
    <ligand>
        <name>GTP</name>
        <dbReference type="ChEBI" id="CHEBI:37565"/>
    </ligand>
</feature>
<feature type="binding site" evidence="1">
    <location>
        <position position="173"/>
    </location>
    <ligand>
        <name>Mg(2+)</name>
        <dbReference type="ChEBI" id="CHEBI:18420"/>
    </ligand>
</feature>
<feature type="binding site" evidence="1">
    <location>
        <begin position="191"/>
        <end position="195"/>
    </location>
    <ligand>
        <name>GTP</name>
        <dbReference type="ChEBI" id="CHEBI:37565"/>
    </ligand>
</feature>
<feature type="binding site" evidence="1">
    <location>
        <position position="193"/>
    </location>
    <ligand>
        <name>Mg(2+)</name>
        <dbReference type="ChEBI" id="CHEBI:18420"/>
    </ligand>
</feature>
<feature type="binding site" evidence="1">
    <location>
        <begin position="213"/>
        <end position="216"/>
    </location>
    <ligand>
        <name>GTP</name>
        <dbReference type="ChEBI" id="CHEBI:37565"/>
    </ligand>
</feature>
<feature type="binding site" evidence="1">
    <location>
        <begin position="283"/>
        <end position="286"/>
    </location>
    <ligand>
        <name>GTP</name>
        <dbReference type="ChEBI" id="CHEBI:37565"/>
    </ligand>
</feature>
<feature type="binding site" evidence="1">
    <location>
        <begin position="314"/>
        <end position="316"/>
    </location>
    <ligand>
        <name>GTP</name>
        <dbReference type="ChEBI" id="CHEBI:37565"/>
    </ligand>
</feature>
<keyword id="KW-0963">Cytoplasm</keyword>
<keyword id="KW-0342">GTP-binding</keyword>
<keyword id="KW-0378">Hydrolase</keyword>
<keyword id="KW-0460">Magnesium</keyword>
<keyword id="KW-0479">Metal-binding</keyword>
<keyword id="KW-0547">Nucleotide-binding</keyword>
<keyword id="KW-1185">Reference proteome</keyword>
<accession>Q5E871</accession>
<organism>
    <name type="scientific">Aliivibrio fischeri (strain ATCC 700601 / ES114)</name>
    <name type="common">Vibrio fischeri</name>
    <dbReference type="NCBI Taxonomy" id="312309"/>
    <lineage>
        <taxon>Bacteria</taxon>
        <taxon>Pseudomonadati</taxon>
        <taxon>Pseudomonadota</taxon>
        <taxon>Gammaproteobacteria</taxon>
        <taxon>Vibrionales</taxon>
        <taxon>Vibrionaceae</taxon>
        <taxon>Aliivibrio</taxon>
    </lineage>
</organism>
<proteinExistence type="inferred from homology"/>
<dbReference type="EC" id="3.6.5.-" evidence="1"/>
<dbReference type="EMBL" id="CP000020">
    <property type="protein sequence ID" value="AAW84775.1"/>
    <property type="molecule type" value="Genomic_DNA"/>
</dbReference>
<dbReference type="RefSeq" id="WP_011261095.1">
    <property type="nucleotide sequence ID" value="NC_006840.2"/>
</dbReference>
<dbReference type="RefSeq" id="YP_203663.1">
    <property type="nucleotide sequence ID" value="NC_006840.2"/>
</dbReference>
<dbReference type="SMR" id="Q5E871"/>
<dbReference type="STRING" id="312309.VF_0280"/>
<dbReference type="EnsemblBacteria" id="AAW84775">
    <property type="protein sequence ID" value="AAW84775"/>
    <property type="gene ID" value="VF_0280"/>
</dbReference>
<dbReference type="GeneID" id="54162901"/>
<dbReference type="KEGG" id="vfi:VF_0280"/>
<dbReference type="PATRIC" id="fig|312309.11.peg.275"/>
<dbReference type="eggNOG" id="COG0536">
    <property type="taxonomic scope" value="Bacteria"/>
</dbReference>
<dbReference type="HOGENOM" id="CLU_011747_2_0_6"/>
<dbReference type="OrthoDB" id="9807318at2"/>
<dbReference type="Proteomes" id="UP000000537">
    <property type="component" value="Chromosome I"/>
</dbReference>
<dbReference type="GO" id="GO:0005737">
    <property type="term" value="C:cytoplasm"/>
    <property type="evidence" value="ECO:0007669"/>
    <property type="project" value="UniProtKB-SubCell"/>
</dbReference>
<dbReference type="GO" id="GO:0005525">
    <property type="term" value="F:GTP binding"/>
    <property type="evidence" value="ECO:0007669"/>
    <property type="project" value="UniProtKB-UniRule"/>
</dbReference>
<dbReference type="GO" id="GO:0003924">
    <property type="term" value="F:GTPase activity"/>
    <property type="evidence" value="ECO:0007669"/>
    <property type="project" value="UniProtKB-UniRule"/>
</dbReference>
<dbReference type="GO" id="GO:0000287">
    <property type="term" value="F:magnesium ion binding"/>
    <property type="evidence" value="ECO:0007669"/>
    <property type="project" value="InterPro"/>
</dbReference>
<dbReference type="GO" id="GO:0042254">
    <property type="term" value="P:ribosome biogenesis"/>
    <property type="evidence" value="ECO:0007669"/>
    <property type="project" value="UniProtKB-UniRule"/>
</dbReference>
<dbReference type="CDD" id="cd01898">
    <property type="entry name" value="Obg"/>
    <property type="match status" value="1"/>
</dbReference>
<dbReference type="FunFam" id="2.70.210.12:FF:000001">
    <property type="entry name" value="GTPase Obg"/>
    <property type="match status" value="1"/>
</dbReference>
<dbReference type="Gene3D" id="2.70.210.12">
    <property type="entry name" value="GTP1/OBG domain"/>
    <property type="match status" value="1"/>
</dbReference>
<dbReference type="Gene3D" id="3.40.50.300">
    <property type="entry name" value="P-loop containing nucleotide triphosphate hydrolases"/>
    <property type="match status" value="1"/>
</dbReference>
<dbReference type="HAMAP" id="MF_01454">
    <property type="entry name" value="GTPase_Obg"/>
    <property type="match status" value="1"/>
</dbReference>
<dbReference type="InterPro" id="IPR031167">
    <property type="entry name" value="G_OBG"/>
</dbReference>
<dbReference type="InterPro" id="IPR006073">
    <property type="entry name" value="GTP-bd"/>
</dbReference>
<dbReference type="InterPro" id="IPR014100">
    <property type="entry name" value="GTP-bd_Obg/CgtA"/>
</dbReference>
<dbReference type="InterPro" id="IPR006074">
    <property type="entry name" value="GTP1-OBG_CS"/>
</dbReference>
<dbReference type="InterPro" id="IPR006169">
    <property type="entry name" value="GTP1_OBG_dom"/>
</dbReference>
<dbReference type="InterPro" id="IPR036726">
    <property type="entry name" value="GTP1_OBG_dom_sf"/>
</dbReference>
<dbReference type="InterPro" id="IPR045086">
    <property type="entry name" value="OBG_GTPase"/>
</dbReference>
<dbReference type="InterPro" id="IPR027417">
    <property type="entry name" value="P-loop_NTPase"/>
</dbReference>
<dbReference type="NCBIfam" id="TIGR02729">
    <property type="entry name" value="Obg_CgtA"/>
    <property type="match status" value="1"/>
</dbReference>
<dbReference type="NCBIfam" id="NF008955">
    <property type="entry name" value="PRK12297.1"/>
    <property type="match status" value="1"/>
</dbReference>
<dbReference type="NCBIfam" id="NF008956">
    <property type="entry name" value="PRK12299.1"/>
    <property type="match status" value="1"/>
</dbReference>
<dbReference type="PANTHER" id="PTHR11702">
    <property type="entry name" value="DEVELOPMENTALLY REGULATED GTP-BINDING PROTEIN-RELATED"/>
    <property type="match status" value="1"/>
</dbReference>
<dbReference type="PANTHER" id="PTHR11702:SF31">
    <property type="entry name" value="MITOCHONDRIAL RIBOSOME-ASSOCIATED GTPASE 2"/>
    <property type="match status" value="1"/>
</dbReference>
<dbReference type="Pfam" id="PF01018">
    <property type="entry name" value="GTP1_OBG"/>
    <property type="match status" value="1"/>
</dbReference>
<dbReference type="Pfam" id="PF01926">
    <property type="entry name" value="MMR_HSR1"/>
    <property type="match status" value="1"/>
</dbReference>
<dbReference type="PIRSF" id="PIRSF002401">
    <property type="entry name" value="GTP_bd_Obg/CgtA"/>
    <property type="match status" value="1"/>
</dbReference>
<dbReference type="PRINTS" id="PR00326">
    <property type="entry name" value="GTP1OBG"/>
</dbReference>
<dbReference type="SUPFAM" id="SSF82051">
    <property type="entry name" value="Obg GTP-binding protein N-terminal domain"/>
    <property type="match status" value="1"/>
</dbReference>
<dbReference type="SUPFAM" id="SSF52540">
    <property type="entry name" value="P-loop containing nucleoside triphosphate hydrolases"/>
    <property type="match status" value="1"/>
</dbReference>
<dbReference type="PROSITE" id="PS51710">
    <property type="entry name" value="G_OBG"/>
    <property type="match status" value="1"/>
</dbReference>
<dbReference type="PROSITE" id="PS00905">
    <property type="entry name" value="GTP1_OBG"/>
    <property type="match status" value="1"/>
</dbReference>
<dbReference type="PROSITE" id="PS51883">
    <property type="entry name" value="OBG"/>
    <property type="match status" value="1"/>
</dbReference>
<comment type="function">
    <text evidence="1">An essential GTPase which binds GTP, GDP and possibly (p)ppGpp with moderate affinity, with high nucleotide exchange rates and a fairly low GTP hydrolysis rate. Plays a role in control of the cell cycle, stress response, ribosome biogenesis and in those bacteria that undergo differentiation, in morphogenesis control.</text>
</comment>
<comment type="cofactor">
    <cofactor evidence="1">
        <name>Mg(2+)</name>
        <dbReference type="ChEBI" id="CHEBI:18420"/>
    </cofactor>
</comment>
<comment type="subunit">
    <text evidence="1">Monomer.</text>
</comment>
<comment type="subcellular location">
    <subcellularLocation>
        <location evidence="1">Cytoplasm</location>
    </subcellularLocation>
</comment>
<comment type="similarity">
    <text evidence="1">Belongs to the TRAFAC class OBG-HflX-like GTPase superfamily. OBG GTPase family.</text>
</comment>
<name>OBG_ALIF1</name>
<evidence type="ECO:0000255" key="1">
    <source>
        <dbReference type="HAMAP-Rule" id="MF_01454"/>
    </source>
</evidence>
<evidence type="ECO:0000255" key="2">
    <source>
        <dbReference type="PROSITE-ProRule" id="PRU01231"/>
    </source>
</evidence>
<sequence length="390" mass="43013">MKFVDEATIKVDAGDGGNGVVSFWREKFVAKGGPDGGDGGDGGDVYLEADENLNTLIDYRFNRFYNAERGKNGSGGNCTGKRGEDITLKVPVGTRAIDIDTGEKVAELMTHGMKQMVAKGGWHGLGNTRFKSSVNRAPRQKTLGTKGEVRELRLELLLLADVGMLGLPNAGKSTFIRAVSAAKPKVADYPFTTLIPSLGVVRARGNKSFVVADIPGLIEGAADGAGLGVRFLKHLERCRVLLHVIDILPIDGSDPVQNALTIIDELEQYSEKVASKPRWLLFNKTDLLLEEEADEKINEILEALAWEDRYFKIAAVSRTGTQELCDELADFMDTLPKEIQTEEEKAANKVDFMWDDYHKDAMSGKDVVTEDDWDDWDDEEDDGHVIYVRD</sequence>
<gene>
    <name evidence="1" type="primary">obg</name>
    <name type="ordered locus">VF_0280</name>
</gene>
<protein>
    <recommendedName>
        <fullName evidence="1">GTPase Obg</fullName>
        <ecNumber evidence="1">3.6.5.-</ecNumber>
    </recommendedName>
    <alternativeName>
        <fullName evidence="1">GTP-binding protein Obg</fullName>
    </alternativeName>
</protein>